<keyword id="KW-0997">Cell inner membrane</keyword>
<keyword id="KW-1003">Cell membrane</keyword>
<keyword id="KW-0285">Flavoprotein</keyword>
<keyword id="KW-0288">FMN</keyword>
<keyword id="KW-0472">Membrane</keyword>
<keyword id="KW-0520">NAD</keyword>
<keyword id="KW-0560">Oxidoreductase</keyword>
<evidence type="ECO:0000255" key="1">
    <source>
        <dbReference type="HAMAP-Rule" id="MF_01414"/>
    </source>
</evidence>
<organism>
    <name type="scientific">Escherichia coli (strain SMS-3-5 / SECEC)</name>
    <dbReference type="NCBI Taxonomy" id="439855"/>
    <lineage>
        <taxon>Bacteria</taxon>
        <taxon>Pseudomonadati</taxon>
        <taxon>Pseudomonadota</taxon>
        <taxon>Gammaproteobacteria</taxon>
        <taxon>Enterobacterales</taxon>
        <taxon>Enterobacteriaceae</taxon>
        <taxon>Escherichia</taxon>
    </lineage>
</organism>
<comment type="function">
    <text evidence="1">Regulatory subunit of a potassium efflux system that confers protection against electrophiles. Required for full activity of KefC. Shows redox enzymatic activity, but this enzymatic activity is not required for activation of KefC.</text>
</comment>
<comment type="catalytic activity">
    <reaction evidence="1">
        <text>a quinone + NADH + H(+) = a quinol + NAD(+)</text>
        <dbReference type="Rhea" id="RHEA:46160"/>
        <dbReference type="ChEBI" id="CHEBI:15378"/>
        <dbReference type="ChEBI" id="CHEBI:24646"/>
        <dbReference type="ChEBI" id="CHEBI:57540"/>
        <dbReference type="ChEBI" id="CHEBI:57945"/>
        <dbReference type="ChEBI" id="CHEBI:132124"/>
        <dbReference type="EC" id="1.6.5.2"/>
    </reaction>
</comment>
<comment type="catalytic activity">
    <reaction evidence="1">
        <text>a quinone + NADPH + H(+) = a quinol + NADP(+)</text>
        <dbReference type="Rhea" id="RHEA:46164"/>
        <dbReference type="ChEBI" id="CHEBI:15378"/>
        <dbReference type="ChEBI" id="CHEBI:24646"/>
        <dbReference type="ChEBI" id="CHEBI:57783"/>
        <dbReference type="ChEBI" id="CHEBI:58349"/>
        <dbReference type="ChEBI" id="CHEBI:132124"/>
        <dbReference type="EC" id="1.6.5.2"/>
    </reaction>
</comment>
<comment type="cofactor">
    <cofactor evidence="1">
        <name>FMN</name>
        <dbReference type="ChEBI" id="CHEBI:58210"/>
    </cofactor>
</comment>
<comment type="subunit">
    <text evidence="1">Homodimer. Interacts with KefC.</text>
</comment>
<comment type="subcellular location">
    <subcellularLocation>
        <location evidence="1">Cell inner membrane</location>
        <topology evidence="1">Peripheral membrane protein</topology>
        <orientation evidence="1">Cytoplasmic side</orientation>
    </subcellularLocation>
</comment>
<comment type="similarity">
    <text evidence="1">Belongs to the NAD(P)H dehydrogenase (quinone) family. KefF subfamily.</text>
</comment>
<gene>
    <name evidence="1" type="primary">kefF</name>
    <name type="ordered locus">EcSMS35_0048</name>
</gene>
<name>KEFF_ECOSM</name>
<accession>B1LFY0</accession>
<feature type="chain" id="PRO_1000145560" description="Glutathione-regulated potassium-efflux system ancillary protein KefF">
    <location>
        <begin position="1"/>
        <end position="176"/>
    </location>
</feature>
<feature type="binding site" evidence="1">
    <location>
        <position position="8"/>
    </location>
    <ligand>
        <name>FMN</name>
        <dbReference type="ChEBI" id="CHEBI:58210"/>
    </ligand>
</feature>
<feature type="binding site" evidence="1">
    <location>
        <begin position="14"/>
        <end position="17"/>
    </location>
    <ligand>
        <name>FMN</name>
        <dbReference type="ChEBI" id="CHEBI:58210"/>
    </ligand>
</feature>
<feature type="binding site" evidence="1">
    <location>
        <begin position="65"/>
        <end position="68"/>
    </location>
    <ligand>
        <name>FMN</name>
        <dbReference type="ChEBI" id="CHEBI:58210"/>
    </ligand>
</feature>
<feature type="binding site" evidence="1">
    <location>
        <begin position="105"/>
        <end position="108"/>
    </location>
    <ligand>
        <name>FMN</name>
        <dbReference type="ChEBI" id="CHEBI:58210"/>
    </ligand>
</feature>
<reference key="1">
    <citation type="journal article" date="2008" name="J. Bacteriol.">
        <title>Insights into the environmental resistance gene pool from the genome sequence of the multidrug-resistant environmental isolate Escherichia coli SMS-3-5.</title>
        <authorList>
            <person name="Fricke W.F."/>
            <person name="Wright M.S."/>
            <person name="Lindell A.H."/>
            <person name="Harkins D.M."/>
            <person name="Baker-Austin C."/>
            <person name="Ravel J."/>
            <person name="Stepanauskas R."/>
        </authorList>
    </citation>
    <scope>NUCLEOTIDE SEQUENCE [LARGE SCALE GENOMIC DNA]</scope>
    <source>
        <strain>SMS-3-5 / SECEC</strain>
    </source>
</reference>
<dbReference type="EC" id="1.6.5.2" evidence="1"/>
<dbReference type="EMBL" id="CP000970">
    <property type="protein sequence ID" value="ACB15577.1"/>
    <property type="molecule type" value="Genomic_DNA"/>
</dbReference>
<dbReference type="RefSeq" id="WP_000600725.1">
    <property type="nucleotide sequence ID" value="NC_010498.1"/>
</dbReference>
<dbReference type="SMR" id="B1LFY0"/>
<dbReference type="GeneID" id="89519427"/>
<dbReference type="KEGG" id="ecm:EcSMS35_0048"/>
<dbReference type="HOGENOM" id="CLU_058643_0_2_6"/>
<dbReference type="Proteomes" id="UP000007011">
    <property type="component" value="Chromosome"/>
</dbReference>
<dbReference type="GO" id="GO:0005886">
    <property type="term" value="C:plasma membrane"/>
    <property type="evidence" value="ECO:0007669"/>
    <property type="project" value="UniProtKB-SubCell"/>
</dbReference>
<dbReference type="GO" id="GO:0009055">
    <property type="term" value="F:electron transfer activity"/>
    <property type="evidence" value="ECO:0007669"/>
    <property type="project" value="TreeGrafter"/>
</dbReference>
<dbReference type="GO" id="GO:0010181">
    <property type="term" value="F:FMN binding"/>
    <property type="evidence" value="ECO:0007669"/>
    <property type="project" value="UniProtKB-UniRule"/>
</dbReference>
<dbReference type="GO" id="GO:0050136">
    <property type="term" value="F:NADH:ubiquinone reductase (non-electrogenic) activity"/>
    <property type="evidence" value="ECO:0007669"/>
    <property type="project" value="RHEA"/>
</dbReference>
<dbReference type="GO" id="GO:0008753">
    <property type="term" value="F:NADPH dehydrogenase (quinone) activity"/>
    <property type="evidence" value="ECO:0007669"/>
    <property type="project" value="RHEA"/>
</dbReference>
<dbReference type="GO" id="GO:1901381">
    <property type="term" value="P:positive regulation of potassium ion transmembrane transport"/>
    <property type="evidence" value="ECO:0007669"/>
    <property type="project" value="UniProtKB-UniRule"/>
</dbReference>
<dbReference type="GO" id="GO:0006813">
    <property type="term" value="P:potassium ion transport"/>
    <property type="evidence" value="ECO:0007669"/>
    <property type="project" value="InterPro"/>
</dbReference>
<dbReference type="FunFam" id="3.40.50.360:FF:000008">
    <property type="entry name" value="Glutathione-regulated potassium-efflux system ancillary protein KefF"/>
    <property type="match status" value="1"/>
</dbReference>
<dbReference type="Gene3D" id="3.40.50.360">
    <property type="match status" value="1"/>
</dbReference>
<dbReference type="HAMAP" id="MF_01414">
    <property type="entry name" value="K_H_efflux_KefF"/>
    <property type="match status" value="1"/>
</dbReference>
<dbReference type="InterPro" id="IPR003680">
    <property type="entry name" value="Flavodoxin_fold"/>
</dbReference>
<dbReference type="InterPro" id="IPR029039">
    <property type="entry name" value="Flavoprotein-like_sf"/>
</dbReference>
<dbReference type="InterPro" id="IPR023948">
    <property type="entry name" value="K_H_efflux_KefF"/>
</dbReference>
<dbReference type="InterPro" id="IPR046980">
    <property type="entry name" value="KefG/KefF"/>
</dbReference>
<dbReference type="NCBIfam" id="NF002044">
    <property type="entry name" value="PRK00871.1"/>
    <property type="match status" value="1"/>
</dbReference>
<dbReference type="PANTHER" id="PTHR47307:SF2">
    <property type="entry name" value="GLUTATHIONE-REGULATED POTASSIUM-EFFLUX SYSTEM ANCILLARY PROTEIN KEFF"/>
    <property type="match status" value="1"/>
</dbReference>
<dbReference type="PANTHER" id="PTHR47307">
    <property type="entry name" value="GLUTATHIONE-REGULATED POTASSIUM-EFFLUX SYSTEM ANCILLARY PROTEIN KEFG"/>
    <property type="match status" value="1"/>
</dbReference>
<dbReference type="Pfam" id="PF02525">
    <property type="entry name" value="Flavodoxin_2"/>
    <property type="match status" value="1"/>
</dbReference>
<dbReference type="SUPFAM" id="SSF52218">
    <property type="entry name" value="Flavoproteins"/>
    <property type="match status" value="1"/>
</dbReference>
<protein>
    <recommendedName>
        <fullName evidence="1">Glutathione-regulated potassium-efflux system ancillary protein KefF</fullName>
    </recommendedName>
    <alternativeName>
        <fullName evidence="1">Quinone oxidoreductase KefF</fullName>
        <ecNumber evidence="1">1.6.5.2</ecNumber>
    </alternativeName>
</protein>
<sequence length="176" mass="20170">MILIIYAHPYPHHSHANKRMLEQARTLEGVEIRSLYQLYPDFNIDIAAEQEALSRADLIVWQHPMQWYSIPPLLKLWIDKVFSHGWAYGHGGTALHGKHLLWAVTTGGGESHFEIGAHPGFDVLSQPLQATAIYCGLNWLPPFAMHCTFICDDETLEGQARHYKQRLLEWQEAHHG</sequence>
<proteinExistence type="inferred from homology"/>